<accession>P20183</accession>
<evidence type="ECO:0000256" key="1">
    <source>
        <dbReference type="SAM" id="MobiDB-lite"/>
    </source>
</evidence>
<protein>
    <recommendedName>
        <fullName>Uncharacterized 15.5 kDa protein in transposon Tn4556</fullName>
    </recommendedName>
</protein>
<keyword id="KW-0814">Transposable element</keyword>
<feature type="chain" id="PRO_0000066515" description="Uncharacterized 15.5 kDa protein in transposon Tn4556">
    <location>
        <begin position="1"/>
        <end position="143"/>
    </location>
</feature>
<feature type="region of interest" description="Disordered" evidence="1">
    <location>
        <begin position="35"/>
        <end position="59"/>
    </location>
</feature>
<feature type="compositionally biased region" description="Basic and acidic residues" evidence="1">
    <location>
        <begin position="36"/>
        <end position="52"/>
    </location>
</feature>
<dbReference type="EMBL" id="M29297">
    <property type="protein sequence ID" value="AAA88565.1"/>
    <property type="molecule type" value="Genomic_DNA"/>
</dbReference>
<dbReference type="PIR" id="JQ0425">
    <property type="entry name" value="JQ0425"/>
</dbReference>
<reference key="1">
    <citation type="journal article" date="1990" name="Gene">
        <title>Nucleotide sequence of Streptomyces fradiae transposable element Tn4556: a class-II transposon related to Tn3.</title>
        <authorList>
            <person name="Siemieniak D.R."/>
            <person name="Slightom J.L."/>
            <person name="Chung S.T."/>
        </authorList>
    </citation>
    <scope>NUCLEOTIDE SEQUENCE [GENOMIC DNA]</scope>
    <source>
        <transposon>Tn4556</transposon>
    </source>
</reference>
<sequence length="143" mass="15538">MVKPPLRCQGGQVARGHRALSIALKTEDLVGGLSITKDRGDRDDGRYGEPRIQRKPGQLTANDPVAYDFVRHVASVSTRDLKVGVVDGQRIPVRFAHDKSAAWAKDTPGLCKCLGRVRHVLEHAVGPGTVDAAVLERERVDIA</sequence>
<organism>
    <name type="scientific">Streptomyces fradiae</name>
    <name type="common">Streptomyces roseoflavus</name>
    <dbReference type="NCBI Taxonomy" id="1906"/>
    <lineage>
        <taxon>Bacteria</taxon>
        <taxon>Bacillati</taxon>
        <taxon>Actinomycetota</taxon>
        <taxon>Actinomycetes</taxon>
        <taxon>Kitasatosporales</taxon>
        <taxon>Streptomycetaceae</taxon>
        <taxon>Streptomyces</taxon>
    </lineage>
</organism>
<proteinExistence type="predicted"/>
<name>YT15_STRFR</name>